<feature type="chain" id="PRO_1000089094" description="Argininosuccinate lyase">
    <location>
        <begin position="1"/>
        <end position="459"/>
    </location>
</feature>
<sequence>MSNRMWGGRFASGPAEIMEEINASIGFDKRLAPQDIRGSLAHVAMLGKAGILPAEDVAAIEAGLKSVRDEIEAGTFAFKRELEDIHMSVESRLTEIVGPAAGRLHTARSRNDQVATDMKLWVRDTLDSLDQQAADLQRALADKALKHADTVMPGFTHLQSAQPVTFGHHCLAYVEMLARDRGRFRDARARLNESPLGAAALAGTSFPIDRHATAAALGFDRPTANSLDSVADRDFALEALAAASICAVHLSRFAEELVVWTSAQFNFVRLSDGFTTGSSIMPQKRNPDAAELVRAKSGRIIGALTGLLIVMKGLPLAYSKDMQEDKEGTFDALQALSLCLAAMTGMVKDLEPNAEVLARAAGSGYATATDLADWLVRELGLPFRQAHHVTGRLVGVASAKGVGLEALSLPEMQEAEPRITEAVYAVLGVENSVASRTSYGGTAPDNVRRQAQAWIERLG</sequence>
<gene>
    <name evidence="1" type="primary">argH</name>
    <name type="ordered locus">Mrad2831_4504</name>
</gene>
<reference key="1">
    <citation type="submission" date="2008-03" db="EMBL/GenBank/DDBJ databases">
        <title>Complete sequence of chromosome of Methylobacterium radiotolerans JCM 2831.</title>
        <authorList>
            <consortium name="US DOE Joint Genome Institute"/>
            <person name="Copeland A."/>
            <person name="Lucas S."/>
            <person name="Lapidus A."/>
            <person name="Glavina del Rio T."/>
            <person name="Dalin E."/>
            <person name="Tice H."/>
            <person name="Bruce D."/>
            <person name="Goodwin L."/>
            <person name="Pitluck S."/>
            <person name="Kiss H."/>
            <person name="Brettin T."/>
            <person name="Detter J.C."/>
            <person name="Han C."/>
            <person name="Kuske C.R."/>
            <person name="Schmutz J."/>
            <person name="Larimer F."/>
            <person name="Land M."/>
            <person name="Hauser L."/>
            <person name="Kyrpides N."/>
            <person name="Mikhailova N."/>
            <person name="Marx C.J."/>
            <person name="Richardson P."/>
        </authorList>
    </citation>
    <scope>NUCLEOTIDE SEQUENCE [LARGE SCALE GENOMIC DNA]</scope>
    <source>
        <strain>ATCC 27329 / DSM 1819 / JCM 2831 / NBRC 15690 / NCIMB 10815 / 0-1</strain>
    </source>
</reference>
<comment type="catalytic activity">
    <reaction evidence="1">
        <text>2-(N(omega)-L-arginino)succinate = fumarate + L-arginine</text>
        <dbReference type="Rhea" id="RHEA:24020"/>
        <dbReference type="ChEBI" id="CHEBI:29806"/>
        <dbReference type="ChEBI" id="CHEBI:32682"/>
        <dbReference type="ChEBI" id="CHEBI:57472"/>
        <dbReference type="EC" id="4.3.2.1"/>
    </reaction>
</comment>
<comment type="pathway">
    <text evidence="1">Amino-acid biosynthesis; L-arginine biosynthesis; L-arginine from L-ornithine and carbamoyl phosphate: step 3/3.</text>
</comment>
<comment type="subcellular location">
    <subcellularLocation>
        <location evidence="1">Cytoplasm</location>
    </subcellularLocation>
</comment>
<comment type="similarity">
    <text evidence="1">Belongs to the lyase 1 family. Argininosuccinate lyase subfamily.</text>
</comment>
<name>ARLY_METRJ</name>
<protein>
    <recommendedName>
        <fullName evidence="1">Argininosuccinate lyase</fullName>
        <shortName evidence="1">ASAL</shortName>
        <ecNumber evidence="1">4.3.2.1</ecNumber>
    </recommendedName>
    <alternativeName>
        <fullName evidence="1">Arginosuccinase</fullName>
    </alternativeName>
</protein>
<dbReference type="EC" id="4.3.2.1" evidence="1"/>
<dbReference type="EMBL" id="CP001001">
    <property type="protein sequence ID" value="ACB26470.1"/>
    <property type="molecule type" value="Genomic_DNA"/>
</dbReference>
<dbReference type="RefSeq" id="WP_012321423.1">
    <property type="nucleotide sequence ID" value="NC_010505.1"/>
</dbReference>
<dbReference type="SMR" id="B1M509"/>
<dbReference type="STRING" id="426355.Mrad2831_4504"/>
<dbReference type="GeneID" id="6140570"/>
<dbReference type="KEGG" id="mrd:Mrad2831_4504"/>
<dbReference type="eggNOG" id="COG0165">
    <property type="taxonomic scope" value="Bacteria"/>
</dbReference>
<dbReference type="HOGENOM" id="CLU_027272_2_3_5"/>
<dbReference type="OrthoDB" id="9769623at2"/>
<dbReference type="UniPathway" id="UPA00068">
    <property type="reaction ID" value="UER00114"/>
</dbReference>
<dbReference type="Proteomes" id="UP000006589">
    <property type="component" value="Chromosome"/>
</dbReference>
<dbReference type="GO" id="GO:0005829">
    <property type="term" value="C:cytosol"/>
    <property type="evidence" value="ECO:0007669"/>
    <property type="project" value="TreeGrafter"/>
</dbReference>
<dbReference type="GO" id="GO:0004056">
    <property type="term" value="F:argininosuccinate lyase activity"/>
    <property type="evidence" value="ECO:0007669"/>
    <property type="project" value="UniProtKB-UniRule"/>
</dbReference>
<dbReference type="GO" id="GO:0042450">
    <property type="term" value="P:arginine biosynthetic process via ornithine"/>
    <property type="evidence" value="ECO:0007669"/>
    <property type="project" value="InterPro"/>
</dbReference>
<dbReference type="GO" id="GO:0006526">
    <property type="term" value="P:L-arginine biosynthetic process"/>
    <property type="evidence" value="ECO:0007669"/>
    <property type="project" value="UniProtKB-UniRule"/>
</dbReference>
<dbReference type="CDD" id="cd01359">
    <property type="entry name" value="Argininosuccinate_lyase"/>
    <property type="match status" value="1"/>
</dbReference>
<dbReference type="FunFam" id="1.10.275.10:FF:000002">
    <property type="entry name" value="Argininosuccinate lyase"/>
    <property type="match status" value="1"/>
</dbReference>
<dbReference type="FunFam" id="1.10.40.30:FF:000001">
    <property type="entry name" value="Argininosuccinate lyase"/>
    <property type="match status" value="1"/>
</dbReference>
<dbReference type="FunFam" id="1.20.200.10:FF:000006">
    <property type="entry name" value="Argininosuccinate lyase"/>
    <property type="match status" value="1"/>
</dbReference>
<dbReference type="Gene3D" id="1.10.40.30">
    <property type="entry name" value="Fumarase/aspartase (C-terminal domain)"/>
    <property type="match status" value="1"/>
</dbReference>
<dbReference type="Gene3D" id="1.20.200.10">
    <property type="entry name" value="Fumarase/aspartase (Central domain)"/>
    <property type="match status" value="1"/>
</dbReference>
<dbReference type="Gene3D" id="1.10.275.10">
    <property type="entry name" value="Fumarase/aspartase (N-terminal domain)"/>
    <property type="match status" value="1"/>
</dbReference>
<dbReference type="HAMAP" id="MF_00006">
    <property type="entry name" value="Arg_succ_lyase"/>
    <property type="match status" value="1"/>
</dbReference>
<dbReference type="InterPro" id="IPR029419">
    <property type="entry name" value="Arg_succ_lyase_C"/>
</dbReference>
<dbReference type="InterPro" id="IPR009049">
    <property type="entry name" value="Argininosuccinate_lyase"/>
</dbReference>
<dbReference type="InterPro" id="IPR024083">
    <property type="entry name" value="Fumarase/histidase_N"/>
</dbReference>
<dbReference type="InterPro" id="IPR020557">
    <property type="entry name" value="Fumarate_lyase_CS"/>
</dbReference>
<dbReference type="InterPro" id="IPR000362">
    <property type="entry name" value="Fumarate_lyase_fam"/>
</dbReference>
<dbReference type="InterPro" id="IPR022761">
    <property type="entry name" value="Fumarate_lyase_N"/>
</dbReference>
<dbReference type="InterPro" id="IPR008948">
    <property type="entry name" value="L-Aspartase-like"/>
</dbReference>
<dbReference type="NCBIfam" id="TIGR00838">
    <property type="entry name" value="argH"/>
    <property type="match status" value="1"/>
</dbReference>
<dbReference type="PANTHER" id="PTHR43814">
    <property type="entry name" value="ARGININOSUCCINATE LYASE"/>
    <property type="match status" value="1"/>
</dbReference>
<dbReference type="PANTHER" id="PTHR43814:SF1">
    <property type="entry name" value="ARGININOSUCCINATE LYASE"/>
    <property type="match status" value="1"/>
</dbReference>
<dbReference type="Pfam" id="PF14698">
    <property type="entry name" value="ASL_C2"/>
    <property type="match status" value="1"/>
</dbReference>
<dbReference type="Pfam" id="PF00206">
    <property type="entry name" value="Lyase_1"/>
    <property type="match status" value="1"/>
</dbReference>
<dbReference type="PRINTS" id="PR00145">
    <property type="entry name" value="ARGSUCLYASE"/>
</dbReference>
<dbReference type="PRINTS" id="PR00149">
    <property type="entry name" value="FUMRATELYASE"/>
</dbReference>
<dbReference type="SUPFAM" id="SSF48557">
    <property type="entry name" value="L-aspartase-like"/>
    <property type="match status" value="1"/>
</dbReference>
<dbReference type="PROSITE" id="PS00163">
    <property type="entry name" value="FUMARATE_LYASES"/>
    <property type="match status" value="1"/>
</dbReference>
<accession>B1M509</accession>
<proteinExistence type="inferred from homology"/>
<evidence type="ECO:0000255" key="1">
    <source>
        <dbReference type="HAMAP-Rule" id="MF_00006"/>
    </source>
</evidence>
<organism>
    <name type="scientific">Methylobacterium radiotolerans (strain ATCC 27329 / DSM 1819 / JCM 2831 / NBRC 15690 / NCIMB 10815 / 0-1)</name>
    <dbReference type="NCBI Taxonomy" id="426355"/>
    <lineage>
        <taxon>Bacteria</taxon>
        <taxon>Pseudomonadati</taxon>
        <taxon>Pseudomonadota</taxon>
        <taxon>Alphaproteobacteria</taxon>
        <taxon>Hyphomicrobiales</taxon>
        <taxon>Methylobacteriaceae</taxon>
        <taxon>Methylobacterium</taxon>
    </lineage>
</organism>
<keyword id="KW-0028">Amino-acid biosynthesis</keyword>
<keyword id="KW-0055">Arginine biosynthesis</keyword>
<keyword id="KW-0963">Cytoplasm</keyword>
<keyword id="KW-0456">Lyase</keyword>